<reference evidence="26" key="1">
    <citation type="journal article" date="1998" name="FEBS Lett.">
        <title>Identification of the mammalian homologues of the Drosophila timeless gene, Timeless1.</title>
        <authorList>
            <person name="Koike N."/>
            <person name="Hida A."/>
            <person name="Numano R."/>
            <person name="Hirose M."/>
            <person name="Sakaki Y."/>
            <person name="Tei H."/>
        </authorList>
    </citation>
    <scope>NUCLEOTIDE SEQUENCE [MRNA] (ISOFORM 1)</scope>
    <scope>TISSUE SPECIFICITY</scope>
    <scope>DEVELOPMENTAL STAGE</scope>
    <source>
        <strain evidence="26">BALB/cJ</strain>
        <tissue>Brain</tissue>
    </source>
</reference>
<reference evidence="20" key="2">
    <citation type="journal article" date="1998" name="Neuron">
        <title>Mammalian circadian autoregulatory loop: a timeless ortholog and mPer1 interact and negatively regulate CLOCK-ARTNL/BMAL1-induced transcription.</title>
        <authorList>
            <person name="Sangoram A.M."/>
            <person name="Saez L."/>
            <person name="Antoch M.P."/>
            <person name="Gekakis N."/>
            <person name="Staknis D."/>
            <person name="Whiteley A."/>
            <person name="Fruechte E.M."/>
            <person name="Vitaterna M.H."/>
            <person name="Shimomura K."/>
            <person name="King D.P."/>
            <person name="Young M.W."/>
            <person name="Weitz C.J."/>
            <person name="Takahashi J.S."/>
        </authorList>
    </citation>
    <scope>NUCLEOTIDE SEQUENCE [MRNA] (ISOFORMS 1 AND 6)</scope>
    <scope>TISSUE SPECIFICITY</scope>
    <scope>DEVELOPMENTAL STAGE</scope>
    <scope>FUNCTION</scope>
    <scope>INTERACTION WITH PER1 AND PER2</scope>
    <source>
        <tissue>Embryo</tissue>
    </source>
</reference>
<reference evidence="19" key="3">
    <citation type="journal article" date="1998" name="Neuron">
        <title>Molecular analysis of mammalian timeless.</title>
        <authorList>
            <person name="Zylka M.J."/>
            <person name="Shearman L.P."/>
            <person name="Levine J.D."/>
            <person name="Jin X."/>
            <person name="Weaver D.R."/>
            <person name="Reppert S.M."/>
        </authorList>
    </citation>
    <scope>NUCLEOTIDE SEQUENCE [MRNA] (ISOFORM 1)</scope>
    <scope>TISSUE SPECIFICITY</scope>
    <source>
        <strain>C57BL/6J</strain>
        <tissue>Brain</tissue>
    </source>
</reference>
<reference evidence="27" key="4">
    <citation type="journal article" date="1999" name="Genes Cells">
        <title>A mammalian ortholog of Drosophila timeless, highly expressed in SCN and retina, forms a complex with mPER1.</title>
        <authorList>
            <person name="Takumi T."/>
            <person name="Nagamine Y."/>
            <person name="Miyake S."/>
            <person name="Matsubara C."/>
            <person name="Taguchi K."/>
            <person name="Takekida S."/>
            <person name="Sakakida Y."/>
            <person name="Nishikawa K."/>
            <person name="Kishimoto T."/>
            <person name="Niwa S."/>
            <person name="Okumura K."/>
            <person name="Okamura H."/>
        </authorList>
    </citation>
    <scope>NUCLEOTIDE SEQUENCE [MRNA] (ISOFORM 1)</scope>
    <scope>SUBCELLULAR LOCATION</scope>
    <scope>TISSUE SPECIFICITY</scope>
    <scope>INDUCTION</scope>
    <scope>INTERACTION WITH PER1</scope>
    <source>
        <strain>BALB/cJ</strain>
        <tissue>Brain</tissue>
    </source>
</reference>
<reference evidence="21" key="5">
    <citation type="journal article" date="2000" name="Proc. Natl. Acad. Sci. U.S.A.">
        <title>A role for Timeless in epithelial morphogenesis during kidney development.</title>
        <authorList>
            <person name="Li Z."/>
            <person name="Stuart R.O."/>
            <person name="Qiao J."/>
            <person name="Pavlova A."/>
            <person name="Bush K.T."/>
            <person name="Pohl M."/>
            <person name="Sakurai H."/>
            <person name="Nigam S.K."/>
        </authorList>
    </citation>
    <scope>NUCLEOTIDE SEQUENCE [MRNA] (ISOFORM 4)</scope>
    <scope>FUNCTION</scope>
    <scope>TISSUE SPECIFICITY</scope>
    <scope>DEVELOPMENTAL STAGE</scope>
    <source>
        <tissue evidence="21">Heart</tissue>
        <tissue>Kidney</tissue>
    </source>
</reference>
<reference evidence="25" key="6">
    <citation type="journal article" date="2004" name="Genome Res.">
        <title>The status, quality, and expansion of the NIH full-length cDNA project: the Mammalian Gene Collection (MGC).</title>
        <authorList>
            <consortium name="The MGC Project Team"/>
        </authorList>
    </citation>
    <scope>NUCLEOTIDE SEQUENCE [LARGE SCALE MRNA] (ISOFORMS 2; 3 AND 5)</scope>
    <source>
        <strain evidence="23 24">C57BL/6J</strain>
        <strain evidence="22">FVB/N</strain>
        <tissue evidence="24">Brain</tissue>
        <tissue evidence="23">Egg</tissue>
        <tissue evidence="25">Olfactory epithelium</tissue>
        <tissue evidence="22">Salivary gland</tissue>
    </source>
</reference>
<reference key="7">
    <citation type="journal article" date="1999" name="Cell">
        <title>mCRY1 and mCRY2 are essential components of the negative limb of the circadian clock feedback loop.</title>
        <authorList>
            <person name="Kume K."/>
            <person name="Zylka M.J."/>
            <person name="Sriram S."/>
            <person name="Shearman L.P."/>
            <person name="Weaver D.R."/>
            <person name="Jin X."/>
            <person name="Maywood E.S."/>
            <person name="Hastings M.H."/>
            <person name="Reppert S.M."/>
        </authorList>
    </citation>
    <scope>INTERACTION WITH CRY1 AND CRY2</scope>
    <scope>FUNCTION</scope>
    <scope>SUBCELLULAR LOCATION</scope>
    <scope>TISSUE SPECIFICITY</scope>
    <scope>INDUCTION</scope>
</reference>
<reference key="8">
    <citation type="journal article" date="2003" name="J. Mol. Biol.">
        <title>Tipin, a novel timeless-interacting protein, is developmentally co-expressed with timeless and disrupts its self-association.</title>
        <authorList>
            <person name="Gotter A.L."/>
        </authorList>
    </citation>
    <scope>INTERACTION WITH TIPIN</scope>
    <scope>DEVELOPMENTAL STAGE</scope>
    <scope>SUBUNIT</scope>
    <scope>FUNCTION</scope>
</reference>
<reference key="9">
    <citation type="journal article" date="2003" name="Science">
        <title>Requirement of mammalian Timeless for circadian rhythmicity.</title>
        <authorList>
            <person name="Barnes J.W."/>
            <person name="Tischkau S.A."/>
            <person name="Barnes J.A."/>
            <person name="Mitchell J.W."/>
            <person name="Burgoon P.W."/>
            <person name="Hickok J.R."/>
            <person name="Gillette M.U."/>
        </authorList>
    </citation>
    <scope>INTERACTION WITH PER1; PER2 AND PER3</scope>
    <scope>INDUCTION</scope>
</reference>
<reference key="10">
    <citation type="journal article" date="2003" name="Science">
        <authorList>
            <person name="Barnes J.W."/>
            <person name="Tischkau S.A."/>
            <person name="Barnes J.A."/>
            <person name="Mitchell J.W."/>
            <person name="Burgoon P.W."/>
            <person name="Hickok J.R."/>
            <person name="Gillette M.U."/>
        </authorList>
    </citation>
    <scope>ERRATUM OF PUBMED:14564007</scope>
</reference>
<reference key="11">
    <citation type="journal article" date="2010" name="Cell">
        <title>A tissue-specific atlas of mouse protein phosphorylation and expression.</title>
        <authorList>
            <person name="Huttlin E.L."/>
            <person name="Jedrychowski M.P."/>
            <person name="Elias J.E."/>
            <person name="Goswami T."/>
            <person name="Rad R."/>
            <person name="Beausoleil S.A."/>
            <person name="Villen J."/>
            <person name="Haas W."/>
            <person name="Sowa M.E."/>
            <person name="Gygi S.P."/>
        </authorList>
    </citation>
    <scope>IDENTIFICATION BY MASS SPECTROMETRY [LARGE SCALE ANALYSIS]</scope>
    <source>
        <tissue>Spleen</tissue>
        <tissue>Testis</tissue>
    </source>
</reference>
<reference key="12">
    <citation type="journal article" date="2013" name="PLoS ONE">
        <title>Mammalian TIMELESS is involved in period determination and DNA damage-dependent phase advancing of the circadian clock.</title>
        <authorList>
            <person name="Engelen E."/>
            <person name="Janssens R.C."/>
            <person name="Yagita K."/>
            <person name="Smits V.A."/>
            <person name="van der Horst G.T."/>
            <person name="Tamanini F."/>
        </authorList>
    </citation>
    <scope>FUNCTION</scope>
    <scope>SUBUNIT</scope>
    <scope>INDUCTION</scope>
    <scope>SUBCELLULAR LOCATION</scope>
    <scope>TISSUE SPECIFICITY</scope>
    <scope>INTERACTION WITH CRY1 AND CHEK1</scope>
</reference>
<reference key="13">
    <citation type="journal article" date="2014" name="Nucleic Acids Res.">
        <title>Modulation of ATR-mediated DNA damage checkpoint response by cryptochrome 1.</title>
        <authorList>
            <person name="Kang T.H."/>
            <person name="Leem S.H."/>
        </authorList>
    </citation>
    <scope>INTERACTION WITH CRY1</scope>
    <scope>SUBCELLULAR LOCATION</scope>
</reference>
<reference key="14">
    <citation type="journal article" date="2019" name="Proc. Natl. Acad. Sci. U.S.A.">
        <title>TIMELESS mutation alters phase responsiveness and causes advanced sleep phase.</title>
        <authorList>
            <person name="Kurien P."/>
            <person name="Hsu P.K."/>
            <person name="Leon J."/>
            <person name="Wu D."/>
            <person name="McMahon T."/>
            <person name="Shi G."/>
            <person name="Xu Y."/>
            <person name="Lipzen A."/>
            <person name="Pennacchio L.A."/>
            <person name="Jones C.R."/>
            <person name="Fu Y.H."/>
            <person name="Ptacek L.J."/>
        </authorList>
    </citation>
    <scope>FUNCTION</scope>
</reference>
<organism>
    <name type="scientific">Mus musculus</name>
    <name type="common">Mouse</name>
    <dbReference type="NCBI Taxonomy" id="10090"/>
    <lineage>
        <taxon>Eukaryota</taxon>
        <taxon>Metazoa</taxon>
        <taxon>Chordata</taxon>
        <taxon>Craniata</taxon>
        <taxon>Vertebrata</taxon>
        <taxon>Euteleostomi</taxon>
        <taxon>Mammalia</taxon>
        <taxon>Eutheria</taxon>
        <taxon>Euarchontoglires</taxon>
        <taxon>Glires</taxon>
        <taxon>Rodentia</taxon>
        <taxon>Myomorpha</taxon>
        <taxon>Muroidea</taxon>
        <taxon>Muridae</taxon>
        <taxon>Murinae</taxon>
        <taxon>Mus</taxon>
        <taxon>Mus</taxon>
    </lineage>
</organism>
<feature type="chain" id="PRO_0000072539" description="Protein timeless homolog">
    <location>
        <begin position="1"/>
        <end position="1197"/>
    </location>
</feature>
<feature type="region of interest" description="Required for homodimerization and for interaction with CRY1 and CHEK1" evidence="8">
    <location>
        <begin position="1"/>
        <end position="309"/>
    </location>
</feature>
<feature type="region of interest" description="Disordered" evidence="2">
    <location>
        <begin position="647"/>
        <end position="674"/>
    </location>
</feature>
<feature type="region of interest" description="DNA-binding domain" evidence="1">
    <location>
        <begin position="810"/>
        <end position="949"/>
    </location>
</feature>
<feature type="region of interest" description="Disordered" evidence="2">
    <location>
        <begin position="943"/>
        <end position="1002"/>
    </location>
</feature>
<feature type="region of interest" description="Interaction with PARP1" evidence="1">
    <location>
        <begin position="997"/>
        <end position="1095"/>
    </location>
</feature>
<feature type="region of interest" description="Required for nuclear localization" evidence="8">
    <location>
        <begin position="1079"/>
        <end position="1197"/>
    </location>
</feature>
<feature type="region of interest" description="Disordered" evidence="2">
    <location>
        <begin position="1088"/>
        <end position="1197"/>
    </location>
</feature>
<feature type="compositionally biased region" description="Acidic residues" evidence="2">
    <location>
        <begin position="656"/>
        <end position="673"/>
    </location>
</feature>
<feature type="compositionally biased region" description="Acidic residues" evidence="2">
    <location>
        <begin position="963"/>
        <end position="985"/>
    </location>
</feature>
<feature type="compositionally biased region" description="Low complexity" evidence="2">
    <location>
        <begin position="986"/>
        <end position="999"/>
    </location>
</feature>
<feature type="compositionally biased region" description="Acidic residues" evidence="2">
    <location>
        <begin position="1099"/>
        <end position="1109"/>
    </location>
</feature>
<feature type="compositionally biased region" description="Acidic residues" evidence="2">
    <location>
        <begin position="1143"/>
        <end position="1153"/>
    </location>
</feature>
<feature type="modified residue" description="Phosphoserine" evidence="1">
    <location>
        <position position="281"/>
    </location>
</feature>
<feature type="modified residue" description="Phosphoserine" evidence="1">
    <location>
        <position position="1071"/>
    </location>
</feature>
<feature type="modified residue" description="Phosphoserine" evidence="1">
    <location>
        <position position="1084"/>
    </location>
</feature>
<feature type="modified residue" description="Phosphothreonine" evidence="1">
    <location>
        <position position="1086"/>
    </location>
</feature>
<feature type="modified residue" description="Phosphoserine" evidence="1">
    <location>
        <position position="1165"/>
    </location>
</feature>
<feature type="splice variant" id="VSP_051694" description="In isoform 4 and isoform 5." evidence="14 15">
    <location>
        <begin position="1"/>
        <end position="721"/>
    </location>
</feature>
<feature type="splice variant" id="VSP_051695" description="In isoform 2, isoform 3 and isoform 4." evidence="14 15">
    <location>
        <position position="952"/>
    </location>
</feature>
<feature type="splice variant" id="VSP_051696" description="In isoform 3." evidence="15">
    <location>
        <begin position="967"/>
        <end position="1104"/>
    </location>
</feature>
<feature type="splice variant" id="VSP_051697" description="In isoform 6." evidence="16">
    <location>
        <position position="1177"/>
    </location>
</feature>
<feature type="sequence conflict" description="In Ref. 6; AAH64788." evidence="18" ref="6">
    <original>I</original>
    <variation>V</variation>
    <location>
        <position position="179"/>
    </location>
</feature>
<feature type="sequence conflict" description="In Ref. 6; AAH64788." evidence="18" ref="6">
    <original>H</original>
    <variation>R</variation>
    <location>
        <position position="298"/>
    </location>
</feature>
<feature type="sequence conflict" description="In Ref. 6; AAH64788." evidence="18" ref="6">
    <original>R</original>
    <variation>G</variation>
    <location>
        <position position="317"/>
    </location>
</feature>
<feature type="sequence conflict" description="In Ref. 4; BAA76390." evidence="18" ref="4">
    <original>A</original>
    <variation>V</variation>
    <location>
        <position position="583"/>
    </location>
</feature>
<feature type="sequence conflict" description="In Ref. 5; AAD24467." evidence="18" ref="5">
    <original>L</original>
    <variation>H</variation>
    <location>
        <position position="744"/>
    </location>
</feature>
<feature type="sequence conflict" description="In Ref. 5; AAD24467." evidence="18" ref="5">
    <original>H</original>
    <variation>Y</variation>
    <location>
        <position position="846"/>
    </location>
</feature>
<feature type="sequence conflict" description="In Ref. 5; AAD24467." evidence="18" ref="5">
    <original>K</original>
    <variation>R</variation>
    <location>
        <position position="956"/>
    </location>
</feature>
<feature type="sequence conflict" description="In Ref. 5; AAD24467." evidence="18" ref="5">
    <original>P</original>
    <variation>L</variation>
    <location>
        <position position="1068"/>
    </location>
</feature>
<feature type="sequence conflict" description="In Ref. 4; BAA76390." evidence="18" ref="4">
    <original>F</original>
    <variation>L</variation>
    <location>
        <position position="1190"/>
    </location>
</feature>
<feature type="sequence conflict" description="In Ref. 4; BAA76390." evidence="18" ref="4">
    <original>D</original>
    <variation>G</variation>
    <location>
        <position position="1196"/>
    </location>
</feature>
<keyword id="KW-0025">Alternative splicing</keyword>
<keyword id="KW-0090">Biological rhythms</keyword>
<keyword id="KW-0131">Cell cycle</keyword>
<keyword id="KW-0132">Cell division</keyword>
<keyword id="KW-0158">Chromosome</keyword>
<keyword id="KW-0217">Developmental protein</keyword>
<keyword id="KW-0227">DNA damage</keyword>
<keyword id="KW-0234">DNA repair</keyword>
<keyword id="KW-0498">Mitosis</keyword>
<keyword id="KW-0539">Nucleus</keyword>
<keyword id="KW-0597">Phosphoprotein</keyword>
<keyword id="KW-1185">Reference proteome</keyword>
<keyword id="KW-0804">Transcription</keyword>
<keyword id="KW-0805">Transcription regulation</keyword>
<evidence type="ECO:0000250" key="1">
    <source>
        <dbReference type="UniProtKB" id="Q9UNS1"/>
    </source>
</evidence>
<evidence type="ECO:0000256" key="2">
    <source>
        <dbReference type="SAM" id="MobiDB-lite"/>
    </source>
</evidence>
<evidence type="ECO:0000269" key="3">
    <source>
    </source>
</evidence>
<evidence type="ECO:0000269" key="4">
    <source>
    </source>
</evidence>
<evidence type="ECO:0000269" key="5">
    <source>
    </source>
</evidence>
<evidence type="ECO:0000269" key="6">
    <source>
    </source>
</evidence>
<evidence type="ECO:0000269" key="7">
    <source>
    </source>
</evidence>
<evidence type="ECO:0000269" key="8">
    <source>
    </source>
</evidence>
<evidence type="ECO:0000269" key="9">
    <source>
    </source>
</evidence>
<evidence type="ECO:0000269" key="10">
    <source>
    </source>
</evidence>
<evidence type="ECO:0000269" key="11">
    <source>
    </source>
</evidence>
<evidence type="ECO:0000269" key="12">
    <source>
    </source>
</evidence>
<evidence type="ECO:0000269" key="13">
    <source>
    </source>
</evidence>
<evidence type="ECO:0000303" key="14">
    <source>
    </source>
</evidence>
<evidence type="ECO:0000303" key="15">
    <source>
    </source>
</evidence>
<evidence type="ECO:0000303" key="16">
    <source>
    </source>
</evidence>
<evidence type="ECO:0000303" key="17">
    <source>
    </source>
</evidence>
<evidence type="ECO:0000305" key="18"/>
<evidence type="ECO:0000312" key="19">
    <source>
        <dbReference type="EMBL" id="AAC79687.1"/>
    </source>
</evidence>
<evidence type="ECO:0000312" key="20">
    <source>
        <dbReference type="EMBL" id="AAC80010.1"/>
    </source>
</evidence>
<evidence type="ECO:0000312" key="21">
    <source>
        <dbReference type="EMBL" id="AAD24467.1"/>
    </source>
</evidence>
<evidence type="ECO:0000312" key="22">
    <source>
        <dbReference type="EMBL" id="AAH26526.1"/>
    </source>
</evidence>
<evidence type="ECO:0000312" key="23">
    <source>
        <dbReference type="EMBL" id="AAH52884.1"/>
    </source>
</evidence>
<evidence type="ECO:0000312" key="24">
    <source>
        <dbReference type="EMBL" id="AAH58641.1"/>
    </source>
</evidence>
<evidence type="ECO:0000312" key="25">
    <source>
        <dbReference type="EMBL" id="AAH82770.1"/>
    </source>
</evidence>
<evidence type="ECO:0000312" key="26">
    <source>
        <dbReference type="EMBL" id="BAA36500.1"/>
    </source>
</evidence>
<evidence type="ECO:0000312" key="27">
    <source>
        <dbReference type="EMBL" id="BAA76390.2"/>
    </source>
</evidence>
<evidence type="ECO:0000312" key="28">
    <source>
        <dbReference type="MGI" id="MGI:1321393"/>
    </source>
</evidence>
<accession>Q9R1X4</accession>
<accession>Q63ZX9</accession>
<accession>Q6P204</accession>
<accession>Q6PDL4</accession>
<accession>Q7TPV8</accession>
<accession>Q8R0Q2</accession>
<accession>Q9R268</accession>
<accession>Q9Z0E7</accession>
<comment type="function">
    <text evidence="1 4 5 6 8 10 11">Plays an important role in the control of DNA replication, maintenance of replication fork stability, maintenance of genome stability throughout normal DNA replication, DNA repair and in the regulation of the circadian clock (PubMed:10428031, PubMed:12875843, PubMed:23418588, PubMed:31138685, PubMed:9856465). Required to stabilize replication forks during DNA replication by forming a complex with TIPIN: this complex regulates DNA replication processes under both normal and stress conditions, stabilizes replication forks and influences both CHEK1 phosphorylation and the intra-S phase checkpoint in response to genotoxic stress (PubMed:12875843). During DNA replication, inhibits the CMG complex ATPase activity and activates DNA polymerases catalytic activities, coupling DNA unwinding and DNA synthesis (By similarity). TIMELESS promotes TIPIN nuclear localization (PubMed:12875843, PubMed:31138685). Plays a role in maintaining processive DNA replication past genomic guanine-rich DNA sequences that form G-quadruplex (G4) structures, possibly together with DDX1 (By similarity). Involved in cell survival after DNA damage or replication stress by promoting DNA repair (PubMed:12875843). In response to double-strand breaks (DSBs), accumulates at DNA damage sites and promotes homologous recombination repair via its interaction with PARP1 (By similarity). May be specifically required for the ATR-CHEK1 pathway in the replication checkpoint induced by hydroxyurea or ultraviolet light (PubMed:23418588). Involved in the determination of period length and in the DNA damage-dependent phase advancing of the circadian clock (PubMed:10428031, PubMed:23418588, PubMed:31138685). Negatively regulates CLOCK|NPAS2-ARTNL/BMAL1|ARTNL2/BMAL2-induced transactivation of PER1 possibly via translocation of PER1 into the nucleus (PubMed:9856465). May also play an important role in epithelial cell morphogenesis and formation of branching tubules (PubMed:10963667).</text>
</comment>
<comment type="subunit">
    <text evidence="1 3 4 6 7 8 9 11">Monomer (By similarity). Homodimer or homomultimer (PubMed:12875843, PubMed:23418588). Component of the circadian core oscillator, which includes the CRY proteins, CLOCK or NPAS2, ARTNL/BMAL1 or ARTNL2/BMAL2, CSKN1D and/or CSNK1E, TIMELESS, and the PER proteins (PubMed:9856465). Interacts directly with PER2; the interaction with PER2 is via its second PAS domain (PubMed:14564007). Interacts directly with PER1 and PER3 (PubMed:10231394, PubMed:14564007, PubMed:9856465). Interacts with CRY1 (PubMed:10428031, PubMed:23418588, PubMed:24489120). Interacts with CRY2 (PubMed:10428031). Interacts with CHEK1, ATR and ATRIP (By similarity). Interacts with CLSPN (By similarity). Interacts (via N-terminus) with TIPIN (PubMed:12875843). The TIMELESS-TIPIN heterodimer binds preferably to guanine-rich quadruplex-forming (G4) DNA structures (By similarity). Associates with the MCM2-7 complex. Interacts with DNA polymerases alpha, delta and epsilon (By similarity). Interacts with DDX11; this interaction increases recruitment of both proteins onto chromatin in response to replication stress induction by hydroxyurea (By similarity). Interacts with PARP1; interaction is direct and independent of poly-ADP-ribose (By similarity).</text>
</comment>
<comment type="interaction">
    <interactant intactId="EBI-1793117">
        <id>Q9R1X4</id>
    </interactant>
    <interactant intactId="EBI-1266764">
        <id>O35973</id>
        <label>Per1</label>
    </interactant>
    <organismsDiffer>false</organismsDiffer>
    <experiments>3</experiments>
</comment>
<comment type="subcellular location">
    <subcellularLocation>
        <location evidence="3 4 8 9">Nucleus</location>
    </subcellularLocation>
    <subcellularLocation>
        <location evidence="1">Chromosome</location>
    </subcellularLocation>
    <text evidence="1">In response to double-strand breaks (DSBs), accumulates at DNA damage sites via its interaction with PARP1.</text>
</comment>
<comment type="alternative products">
    <event type="alternative splicing"/>
    <isoform>
        <id>Q9R1X4-1</id>
        <name evidence="3 11 12 13">1</name>
        <sequence type="displayed"/>
    </isoform>
    <isoform>
        <id>Q9R1X4-2</id>
        <name evidence="18">2</name>
        <sequence type="described" ref="VSP_051695"/>
    </isoform>
    <isoform>
        <id>Q9R1X4-3</id>
        <name evidence="18">3</name>
        <sequence type="described" ref="VSP_051695 VSP_051696"/>
    </isoform>
    <isoform>
        <id>Q9R1X4-4</id>
        <name evidence="5">4</name>
        <name>TIM-s</name>
        <sequence type="described" ref="VSP_051694 VSP_051695"/>
    </isoform>
    <isoform>
        <id>Q9R1X4-5</id>
        <name evidence="18">5</name>
        <sequence type="described" ref="VSP_051694"/>
    </isoform>
    <isoform>
        <id>Q9R1X4-6</id>
        <name evidence="11">6</name>
        <sequence type="described" ref="VSP_051697"/>
    </isoform>
</comment>
<comment type="tissue specificity">
    <text evidence="3 4 5 8 11 12 13">Predominantly and robustly expressed in proliferative organs (spleen, thymus, intestine and testis) compared to those more differentiated such as kidney and liver (at protein level). Expressed in all tissues examined including brain, heart, lung, liver, skeletal muscle, kidney, placenta, pancreas, spleen, thymus and testis. Strongly expressed in the suprachiasmatic nucleus (SCN) and pars tuberalis, moderately in the cingulate cortex, pyrimidal cell layer of the piriform cortex, periventricular part of the caudate putamen, and granular layer of the cerebellum, and weakly in the cerebral cortex, gyrus dentatus, hippocampus and thalamic nuclei. In embryonic kidney, expression is highest in regions of active ureteric bud cell branching.</text>
</comment>
<comment type="developmental stage">
    <text evidence="5 6 11 13">Expression is highest in whole embryos at 11 dpc and gradually decreases as embryonic development progresses. At 7.5 dpc, expressed in germ cell layers. At 14.5 dpc, expressed at highest levels in thymus, liver, gastrointestinal tract, lung and the rapidly proliferating ventricular zone of the brain.</text>
</comment>
<comment type="induction">
    <text evidence="3 4 7 8">In retina, expression exhibits a circadian rhythm in the presence of light/dark cycles. In the suprachiasmatic nucleus (SCN), isoform 1 exhibited 24 hours oscillation, isoform 4 is constitutively expressed. Shows a circadian expression pattern in the intestine with peaks at ZT4 and ZT8.</text>
</comment>
<comment type="domain">
    <text evidence="1">Residues 1172-1189 comprise a putative nuclear localization signal; nuclear localization is required for the regulation of period length of the circadian clock.</text>
</comment>
<comment type="domain">
    <text evidence="1">The DNA-binding domain (residues 810-949) binds to both single-stranded DNA (ssDNA) and double-stranded DNA (dsDNA), and has high affinity for DNA sequences rich in guanine that form G-quadruplex (G4) structures.</text>
</comment>
<comment type="domain">
    <text evidence="1">The C-terminal domain, comprising the DNA-binding domain and the PARP1-binding region, is required for the replication past genomic guanine-rich DNA sequences that form G-quadruplex (G4) structures.</text>
</comment>
<comment type="similarity">
    <text evidence="18">Belongs to the timeless family.</text>
</comment>
<comment type="sequence caution" evidence="18">
    <conflict type="miscellaneous discrepancy">
        <sequence resource="EMBL-CDS" id="AAH52884"/>
    </conflict>
    <text>Contaminating sequence. Potential poly-A sequence.</text>
</comment>
<comment type="sequence caution" evidence="18">
    <conflict type="miscellaneous discrepancy">
        <sequence resource="EMBL-CDS" id="AAH64788"/>
    </conflict>
    <text>Contaminating sequence. Potential poly-A sequence.</text>
</comment>
<gene>
    <name evidence="28" type="primary">Timeless</name>
    <name evidence="26" type="synonym">Tim1</name>
    <name evidence="17" type="synonym">Timeless1</name>
</gene>
<sequence length="1197" mass="137503">MDLYMMNCELLATCSALGYLEGGTYHKEPDCLESVKDLIRYLRHEDETRDVRQQLGAAQILQSDLLPILTQHRQDKPLFDAVIRLMVNLTQPALLCFGSVPKDSSVRHHFLQVLTYLQAYKEAFASEKAFGVLSETLYELLQLGWEDRQEEDNLLIERILLLVRNILHVPANLEQEKSIDDDASIHDRLLWAIHLSGMDDLLLFLSSSSAEQQWSLHVLEIISLMFRDQTPEQLAGVGQGRLAQERSTDVAELEVLRQREMAEKRARALQRGNRHSRFGGSYIVQGLKSIGEKDVVFHKGLHNLQNYSSDLGKQPRRVPKRRQAAQELSVHRRSVLNVRLFLRDFCSEFLENCYNPLMGAVKDHLLRERAQQHDETYYMWAMAFFMAFNRAATFRPGLVSETLSIRTFHFVEQNLTNYYEMMLTDRKEAASWARRMHLALKAYQELLATVNEMDMCPDEAVRESSRIIKNNIFYMMEYRELFLALFRKFDERYHPRSFLRDLVETTHLFLKMLERFCRSRGNLMVQNKRKKRKKKKKVQDQGVAFSQSPGELEAMWPALAEQLLQCAQDPELSVDPVVPFDAASEVPVEEQRVEAMVRIQDCLTAGQAPQALALLRSAREVWPEGNAFGSPVISPGEEMQLLKQILSTPLPRQQEPEEGDAEEEEEEEEEEELQVVQVSEKEFNFLEYLKRFASSTIVRAYVLLLRSYRQNSAHTNHCIAKMLHRLAHGLGMEALLFQLSLFCLFNRLLSDPAAAAYKELVTFAKYIIGKFFALAAVNQKAFVELLFWKNTAVVREMTQGYGSLDSGSSSHRAPLWSPEEEAQLQELYLAHKDVEGQDVVETILAHLKVVPRTRKQVIHHLVRMGLADSVKEFQKRKGTQIVLWTEDQELELQRLFEEFRDSDDVLGQIMKNITAKRSRARVVDKLLALGLVSERRQLYKKRRKKLAPSCMQNGEKSPRDPWQEDPEEEDEHLPEDESEDEESEEGLPSGQGQGSSSLSAENLGESLRQEGLSAPLLWLQSSLIRAANDREEDGCSQAIPLVPLTEENEEAMENEQFQHLLRKLGIRPPSSGQETFWRIPAKLSSTQLRRVAASLSQQENEEEREEEPEPGVPGEQGPSEEHRTEALRALLSARKRKAGLGPTEEEATGEEEWNSAPKKRQLLDSDEEEDDEGRRQAVSGTPRVHRKKRFQIEDEDD</sequence>
<dbReference type="EMBL" id="AB015598">
    <property type="protein sequence ID" value="BAA36500.1"/>
    <property type="molecule type" value="mRNA"/>
</dbReference>
<dbReference type="EMBL" id="AF098161">
    <property type="protein sequence ID" value="AAC80010.1"/>
    <property type="molecule type" value="mRNA"/>
</dbReference>
<dbReference type="EMBL" id="AF071506">
    <property type="protein sequence ID" value="AAC79687.1"/>
    <property type="molecule type" value="mRNA"/>
</dbReference>
<dbReference type="EMBL" id="AB019001">
    <property type="protein sequence ID" value="BAA76390.2"/>
    <property type="molecule type" value="mRNA"/>
</dbReference>
<dbReference type="EMBL" id="AF126480">
    <property type="protein sequence ID" value="AAD24467.1"/>
    <property type="molecule type" value="mRNA"/>
</dbReference>
<dbReference type="EMBL" id="BC026526">
    <property type="protein sequence ID" value="AAH26526.1"/>
    <property type="molecule type" value="mRNA"/>
</dbReference>
<dbReference type="EMBL" id="BC052884">
    <property type="protein sequence ID" value="AAH52884.1"/>
    <property type="status" value="ALT_SEQ"/>
    <property type="molecule type" value="mRNA"/>
</dbReference>
<dbReference type="EMBL" id="BC058641">
    <property type="protein sequence ID" value="AAH58641.1"/>
    <property type="molecule type" value="mRNA"/>
</dbReference>
<dbReference type="EMBL" id="BC064788">
    <property type="protein sequence ID" value="AAH64788.1"/>
    <property type="status" value="ALT_SEQ"/>
    <property type="molecule type" value="mRNA"/>
</dbReference>
<dbReference type="EMBL" id="BC082770">
    <property type="protein sequence ID" value="AAH82770.1"/>
    <property type="molecule type" value="mRNA"/>
</dbReference>
<dbReference type="CCDS" id="CCDS24266.1">
    <molecule id="Q9R1X4-1"/>
</dbReference>
<dbReference type="CCDS" id="CCDS48724.1">
    <molecule id="Q9R1X4-6"/>
</dbReference>
<dbReference type="CCDS" id="CCDS48725.1">
    <molecule id="Q9R1X4-2"/>
</dbReference>
<dbReference type="PIR" id="T13956">
    <property type="entry name" value="T13956"/>
</dbReference>
<dbReference type="RefSeq" id="NP_001129554.1">
    <molecule id="Q9R1X4-2"/>
    <property type="nucleotide sequence ID" value="NM_001136082.2"/>
</dbReference>
<dbReference type="RefSeq" id="NP_001157552.1">
    <molecule id="Q9R1X4-6"/>
    <property type="nucleotide sequence ID" value="NM_001164080.1"/>
</dbReference>
<dbReference type="RefSeq" id="NP_001157553.1">
    <molecule id="Q9R1X4-1"/>
    <property type="nucleotide sequence ID" value="NM_001164081.1"/>
</dbReference>
<dbReference type="RefSeq" id="NP_035719.1">
    <molecule id="Q9R1X4-1"/>
    <property type="nucleotide sequence ID" value="NM_011589.2"/>
</dbReference>
<dbReference type="RefSeq" id="XP_006513646.1">
    <molecule id="Q9R1X4-1"/>
    <property type="nucleotide sequence ID" value="XM_006513583.3"/>
</dbReference>
<dbReference type="EMDB" id="EMD-2789"/>
<dbReference type="SMR" id="Q9R1X4"/>
<dbReference type="BioGRID" id="204198">
    <property type="interactions" value="42"/>
</dbReference>
<dbReference type="CORUM" id="Q9R1X4"/>
<dbReference type="FunCoup" id="Q9R1X4">
    <property type="interactions" value="2205"/>
</dbReference>
<dbReference type="IntAct" id="Q9R1X4">
    <property type="interactions" value="26"/>
</dbReference>
<dbReference type="STRING" id="10090.ENSMUSP00000058021"/>
<dbReference type="GlyGen" id="Q9R1X4">
    <property type="glycosylation" value="1 site, 1 O-linked glycan (1 site)"/>
</dbReference>
<dbReference type="iPTMnet" id="Q9R1X4"/>
<dbReference type="PhosphoSitePlus" id="Q9R1X4"/>
<dbReference type="jPOST" id="Q9R1X4"/>
<dbReference type="PaxDb" id="10090-ENSMUSP00000058021"/>
<dbReference type="PeptideAtlas" id="Q9R1X4"/>
<dbReference type="ProteomicsDB" id="262789">
    <molecule id="Q9R1X4-1"/>
</dbReference>
<dbReference type="ProteomicsDB" id="262790">
    <molecule id="Q9R1X4-2"/>
</dbReference>
<dbReference type="ProteomicsDB" id="262791">
    <molecule id="Q9R1X4-3"/>
</dbReference>
<dbReference type="ProteomicsDB" id="262792">
    <molecule id="Q9R1X4-4"/>
</dbReference>
<dbReference type="ProteomicsDB" id="262793">
    <molecule id="Q9R1X4-5"/>
</dbReference>
<dbReference type="ProteomicsDB" id="262794">
    <molecule id="Q9R1X4-6"/>
</dbReference>
<dbReference type="Pumba" id="Q9R1X4"/>
<dbReference type="Antibodypedia" id="15850">
    <property type="antibodies" value="220 antibodies from 32 providers"/>
</dbReference>
<dbReference type="DNASU" id="21853"/>
<dbReference type="Ensembl" id="ENSMUST00000055539.11">
    <molecule id="Q9R1X4-1"/>
    <property type="protein sequence ID" value="ENSMUSP00000058021.5"/>
    <property type="gene ID" value="ENSMUSG00000039994.16"/>
</dbReference>
<dbReference type="Ensembl" id="ENSMUST00000105242.8">
    <molecule id="Q9R1X4-2"/>
    <property type="protein sequence ID" value="ENSMUSP00000100876.2"/>
    <property type="gene ID" value="ENSMUSG00000039994.16"/>
</dbReference>
<dbReference type="Ensembl" id="ENSMUST00000105244.8">
    <molecule id="Q9R1X4-6"/>
    <property type="protein sequence ID" value="ENSMUSP00000100878.2"/>
    <property type="gene ID" value="ENSMUSG00000039994.16"/>
</dbReference>
<dbReference type="Ensembl" id="ENSMUST00000105245.3">
    <molecule id="Q9R1X4-1"/>
    <property type="protein sequence ID" value="ENSMUSP00000100879.3"/>
    <property type="gene ID" value="ENSMUSG00000039994.16"/>
</dbReference>
<dbReference type="GeneID" id="21853"/>
<dbReference type="KEGG" id="mmu:21853"/>
<dbReference type="UCSC" id="uc007hlv.2">
    <molecule id="Q9R1X4-1"/>
    <property type="organism name" value="mouse"/>
</dbReference>
<dbReference type="UCSC" id="uc007hlw.2">
    <molecule id="Q9R1X4-2"/>
    <property type="organism name" value="mouse"/>
</dbReference>
<dbReference type="AGR" id="MGI:1321393"/>
<dbReference type="CTD" id="8914"/>
<dbReference type="MGI" id="MGI:1321393">
    <property type="gene designation" value="Timeless"/>
</dbReference>
<dbReference type="VEuPathDB" id="HostDB:ENSMUSG00000039994"/>
<dbReference type="eggNOG" id="KOG1974">
    <property type="taxonomic scope" value="Eukaryota"/>
</dbReference>
<dbReference type="GeneTree" id="ENSGT00390000015124"/>
<dbReference type="InParanoid" id="Q9R1X4"/>
<dbReference type="OMA" id="LTRNVAM"/>
<dbReference type="OrthoDB" id="310853at2759"/>
<dbReference type="PhylomeDB" id="Q9R1X4"/>
<dbReference type="TreeFam" id="TF312802"/>
<dbReference type="Reactome" id="R-MMU-5693607">
    <property type="pathway name" value="Processing of DNA double-strand break ends"/>
</dbReference>
<dbReference type="BioGRID-ORCS" id="21853">
    <property type="hits" value="26 hits in 81 CRISPR screens"/>
</dbReference>
<dbReference type="ChiTaRS" id="Timeless">
    <property type="organism name" value="mouse"/>
</dbReference>
<dbReference type="PRO" id="PR:Q9R1X4"/>
<dbReference type="Proteomes" id="UP000000589">
    <property type="component" value="Chromosome 10"/>
</dbReference>
<dbReference type="RNAct" id="Q9R1X4">
    <property type="molecule type" value="protein"/>
</dbReference>
<dbReference type="Bgee" id="ENSMUSG00000039994">
    <property type="expression patterns" value="Expressed in lumbar dorsal root ganglion and 198 other cell types or tissues"/>
</dbReference>
<dbReference type="ExpressionAtlas" id="Q9R1X4">
    <property type="expression patterns" value="baseline and differential"/>
</dbReference>
<dbReference type="GO" id="GO:0000785">
    <property type="term" value="C:chromatin"/>
    <property type="evidence" value="ECO:0007669"/>
    <property type="project" value="Ensembl"/>
</dbReference>
<dbReference type="GO" id="GO:0005654">
    <property type="term" value="C:nucleoplasm"/>
    <property type="evidence" value="ECO:0007669"/>
    <property type="project" value="Ensembl"/>
</dbReference>
<dbReference type="GO" id="GO:0005634">
    <property type="term" value="C:nucleus"/>
    <property type="evidence" value="ECO:0000314"/>
    <property type="project" value="UniProtKB"/>
</dbReference>
<dbReference type="GO" id="GO:0035861">
    <property type="term" value="C:site of double-strand break"/>
    <property type="evidence" value="ECO:0000250"/>
    <property type="project" value="UniProtKB"/>
</dbReference>
<dbReference type="GO" id="GO:0008047">
    <property type="term" value="F:enzyme activator activity"/>
    <property type="evidence" value="ECO:0007669"/>
    <property type="project" value="Ensembl"/>
</dbReference>
<dbReference type="GO" id="GO:0042802">
    <property type="term" value="F:identical protein binding"/>
    <property type="evidence" value="ECO:0000353"/>
    <property type="project" value="MGI"/>
</dbReference>
<dbReference type="GO" id="GO:0001658">
    <property type="term" value="P:branching involved in ureteric bud morphogenesis"/>
    <property type="evidence" value="ECO:0000266"/>
    <property type="project" value="MGI"/>
</dbReference>
<dbReference type="GO" id="GO:0048754">
    <property type="term" value="P:branching morphogenesis of an epithelial tube"/>
    <property type="evidence" value="ECO:0000315"/>
    <property type="project" value="MGI"/>
</dbReference>
<dbReference type="GO" id="GO:0044770">
    <property type="term" value="P:cell cycle phase transition"/>
    <property type="evidence" value="ECO:0007669"/>
    <property type="project" value="Ensembl"/>
</dbReference>
<dbReference type="GO" id="GO:0051301">
    <property type="term" value="P:cell division"/>
    <property type="evidence" value="ECO:0007669"/>
    <property type="project" value="UniProtKB-KW"/>
</dbReference>
<dbReference type="GO" id="GO:1904976">
    <property type="term" value="P:cellular response to bleomycin"/>
    <property type="evidence" value="ECO:0000250"/>
    <property type="project" value="UniProtKB"/>
</dbReference>
<dbReference type="GO" id="GO:0072719">
    <property type="term" value="P:cellular response to cisplatin"/>
    <property type="evidence" value="ECO:0000250"/>
    <property type="project" value="UniProtKB"/>
</dbReference>
<dbReference type="GO" id="GO:0072711">
    <property type="term" value="P:cellular response to hydroxyurea"/>
    <property type="evidence" value="ECO:0000250"/>
    <property type="project" value="UniProtKB"/>
</dbReference>
<dbReference type="GO" id="GO:0007623">
    <property type="term" value="P:circadian rhythm"/>
    <property type="evidence" value="ECO:0000270"/>
    <property type="project" value="UniProtKB"/>
</dbReference>
<dbReference type="GO" id="GO:0006974">
    <property type="term" value="P:DNA damage response"/>
    <property type="evidence" value="ECO:0000315"/>
    <property type="project" value="UniProtKB"/>
</dbReference>
<dbReference type="GO" id="GO:0006281">
    <property type="term" value="P:DNA repair"/>
    <property type="evidence" value="ECO:0007669"/>
    <property type="project" value="UniProtKB-KW"/>
</dbReference>
<dbReference type="GO" id="GO:0030324">
    <property type="term" value="P:lung development"/>
    <property type="evidence" value="ECO:0000315"/>
    <property type="project" value="MGI"/>
</dbReference>
<dbReference type="GO" id="GO:0002009">
    <property type="term" value="P:morphogenesis of an epithelium"/>
    <property type="evidence" value="ECO:0000270"/>
    <property type="project" value="UniProtKB"/>
</dbReference>
<dbReference type="GO" id="GO:0045892">
    <property type="term" value="P:negative regulation of DNA-templated transcription"/>
    <property type="evidence" value="ECO:0000250"/>
    <property type="project" value="UniProtKB"/>
</dbReference>
<dbReference type="GO" id="GO:0000122">
    <property type="term" value="P:negative regulation of transcription by RNA polymerase II"/>
    <property type="evidence" value="ECO:0000304"/>
    <property type="project" value="MGI"/>
</dbReference>
<dbReference type="GO" id="GO:2000781">
    <property type="term" value="P:positive regulation of double-strand break repair"/>
    <property type="evidence" value="ECO:0000250"/>
    <property type="project" value="UniProtKB"/>
</dbReference>
<dbReference type="GO" id="GO:1905168">
    <property type="term" value="P:positive regulation of double-strand break repair via homologous recombination"/>
    <property type="evidence" value="ECO:0000250"/>
    <property type="project" value="UniProtKB"/>
</dbReference>
<dbReference type="GO" id="GO:0042752">
    <property type="term" value="P:regulation of circadian rhythm"/>
    <property type="evidence" value="ECO:0000315"/>
    <property type="project" value="UniProtKB"/>
</dbReference>
<dbReference type="GO" id="GO:0031297">
    <property type="term" value="P:replication fork processing"/>
    <property type="evidence" value="ECO:0007669"/>
    <property type="project" value="Ensembl"/>
</dbReference>
<dbReference type="InterPro" id="IPR044998">
    <property type="entry name" value="Timeless"/>
</dbReference>
<dbReference type="InterPro" id="IPR007725">
    <property type="entry name" value="TIMELESS_C"/>
</dbReference>
<dbReference type="InterPro" id="IPR006906">
    <property type="entry name" value="Timeless_N"/>
</dbReference>
<dbReference type="PANTHER" id="PTHR22940:SF4">
    <property type="entry name" value="PROTEIN TIMELESS HOMOLOG"/>
    <property type="match status" value="1"/>
</dbReference>
<dbReference type="PANTHER" id="PTHR22940">
    <property type="entry name" value="TIMEOUT/TIMELESS-2"/>
    <property type="match status" value="1"/>
</dbReference>
<dbReference type="Pfam" id="PF04821">
    <property type="entry name" value="TIMELESS"/>
    <property type="match status" value="1"/>
</dbReference>
<dbReference type="Pfam" id="PF05029">
    <property type="entry name" value="TIMELESS_C"/>
    <property type="match status" value="1"/>
</dbReference>
<proteinExistence type="evidence at protein level"/>
<name>TIM_MOUSE</name>
<protein>
    <recommendedName>
        <fullName>Protein timeless homolog</fullName>
        <shortName>mTim</shortName>
    </recommendedName>
</protein>